<sequence length="363" mass="39342">MTSVINVNLPTQSYEIAIAPASLDQIGQSLAGLKLGKKVLLVSNPTIFKHFGKVAVDSLEAAGFQVASYSLPAGERYKTLNSIQKLYDIALENRLERSSTMVALGGGVIGDMTGFAAATWLRGINVVQVPTTLLAMVDSAIGGKTGVNHPHGKNLIGAFHQPRFVLIDPQVLKTLPVREFRAGMAEVIKYGVIWDAELFNQLEQSKRLDQLRYIKPELVDAILTRSCQAKADVVGKDEKEGGLRAILNYGHTVGHAVESLTNYRLLKHGEAVGIGMVAAGQIAVNLELWQQADADRQNALIEKAGLPTKLPVGLDIEGIIEALQLDKKVKDGKVRFVLPTQIGVVTVTDEVTSDHIRQVLQQM</sequence>
<dbReference type="EC" id="4.2.3.4" evidence="1"/>
<dbReference type="EMBL" id="BA000019">
    <property type="protein sequence ID" value="BAB73623.1"/>
    <property type="molecule type" value="Genomic_DNA"/>
</dbReference>
<dbReference type="PIR" id="AF2046">
    <property type="entry name" value="AF2046"/>
</dbReference>
<dbReference type="RefSeq" id="WP_010996088.1">
    <property type="nucleotide sequence ID" value="NZ_RSCN01000031.1"/>
</dbReference>
<dbReference type="SMR" id="Q8YVQ0"/>
<dbReference type="STRING" id="103690.gene:10493943"/>
<dbReference type="KEGG" id="ana:alr1924"/>
<dbReference type="eggNOG" id="COG0337">
    <property type="taxonomic scope" value="Bacteria"/>
</dbReference>
<dbReference type="OrthoDB" id="9806583at2"/>
<dbReference type="UniPathway" id="UPA00053">
    <property type="reaction ID" value="UER00085"/>
</dbReference>
<dbReference type="Proteomes" id="UP000002483">
    <property type="component" value="Chromosome"/>
</dbReference>
<dbReference type="GO" id="GO:0005737">
    <property type="term" value="C:cytoplasm"/>
    <property type="evidence" value="ECO:0007669"/>
    <property type="project" value="UniProtKB-SubCell"/>
</dbReference>
<dbReference type="GO" id="GO:0003856">
    <property type="term" value="F:3-dehydroquinate synthase activity"/>
    <property type="evidence" value="ECO:0007669"/>
    <property type="project" value="UniProtKB-UniRule"/>
</dbReference>
<dbReference type="GO" id="GO:0046872">
    <property type="term" value="F:metal ion binding"/>
    <property type="evidence" value="ECO:0007669"/>
    <property type="project" value="UniProtKB-KW"/>
</dbReference>
<dbReference type="GO" id="GO:0000166">
    <property type="term" value="F:nucleotide binding"/>
    <property type="evidence" value="ECO:0007669"/>
    <property type="project" value="UniProtKB-KW"/>
</dbReference>
<dbReference type="GO" id="GO:0008652">
    <property type="term" value="P:amino acid biosynthetic process"/>
    <property type="evidence" value="ECO:0007669"/>
    <property type="project" value="UniProtKB-KW"/>
</dbReference>
<dbReference type="GO" id="GO:0009073">
    <property type="term" value="P:aromatic amino acid family biosynthetic process"/>
    <property type="evidence" value="ECO:0007669"/>
    <property type="project" value="UniProtKB-KW"/>
</dbReference>
<dbReference type="GO" id="GO:0009423">
    <property type="term" value="P:chorismate biosynthetic process"/>
    <property type="evidence" value="ECO:0007669"/>
    <property type="project" value="UniProtKB-UniRule"/>
</dbReference>
<dbReference type="CDD" id="cd08195">
    <property type="entry name" value="DHQS"/>
    <property type="match status" value="1"/>
</dbReference>
<dbReference type="FunFam" id="3.40.50.1970:FF:000001">
    <property type="entry name" value="3-dehydroquinate synthase"/>
    <property type="match status" value="1"/>
</dbReference>
<dbReference type="Gene3D" id="3.40.50.1970">
    <property type="match status" value="1"/>
</dbReference>
<dbReference type="Gene3D" id="1.20.1090.10">
    <property type="entry name" value="Dehydroquinate synthase-like - alpha domain"/>
    <property type="match status" value="1"/>
</dbReference>
<dbReference type="HAMAP" id="MF_00110">
    <property type="entry name" value="DHQ_synthase"/>
    <property type="match status" value="1"/>
</dbReference>
<dbReference type="InterPro" id="IPR050071">
    <property type="entry name" value="Dehydroquinate_synthase"/>
</dbReference>
<dbReference type="InterPro" id="IPR016037">
    <property type="entry name" value="DHQ_synth_AroB"/>
</dbReference>
<dbReference type="InterPro" id="IPR030963">
    <property type="entry name" value="DHQ_synth_fam"/>
</dbReference>
<dbReference type="InterPro" id="IPR030960">
    <property type="entry name" value="DHQS/DOIS_N"/>
</dbReference>
<dbReference type="InterPro" id="IPR056179">
    <property type="entry name" value="DHQS_C"/>
</dbReference>
<dbReference type="NCBIfam" id="TIGR01357">
    <property type="entry name" value="aroB"/>
    <property type="match status" value="1"/>
</dbReference>
<dbReference type="PANTHER" id="PTHR43622">
    <property type="entry name" value="3-DEHYDROQUINATE SYNTHASE"/>
    <property type="match status" value="1"/>
</dbReference>
<dbReference type="PANTHER" id="PTHR43622:SF7">
    <property type="entry name" value="3-DEHYDROQUINATE SYNTHASE, CHLOROPLASTIC"/>
    <property type="match status" value="1"/>
</dbReference>
<dbReference type="Pfam" id="PF01761">
    <property type="entry name" value="DHQ_synthase"/>
    <property type="match status" value="1"/>
</dbReference>
<dbReference type="Pfam" id="PF24621">
    <property type="entry name" value="DHQS_C"/>
    <property type="match status" value="1"/>
</dbReference>
<dbReference type="PIRSF" id="PIRSF001455">
    <property type="entry name" value="DHQ_synth"/>
    <property type="match status" value="1"/>
</dbReference>
<dbReference type="SUPFAM" id="SSF56796">
    <property type="entry name" value="Dehydroquinate synthase-like"/>
    <property type="match status" value="1"/>
</dbReference>
<proteinExistence type="inferred from homology"/>
<organism>
    <name type="scientific">Nostoc sp. (strain PCC 7120 / SAG 25.82 / UTEX 2576)</name>
    <dbReference type="NCBI Taxonomy" id="103690"/>
    <lineage>
        <taxon>Bacteria</taxon>
        <taxon>Bacillati</taxon>
        <taxon>Cyanobacteriota</taxon>
        <taxon>Cyanophyceae</taxon>
        <taxon>Nostocales</taxon>
        <taxon>Nostocaceae</taxon>
        <taxon>Nostoc</taxon>
    </lineage>
</organism>
<gene>
    <name evidence="1" type="primary">aroB</name>
    <name type="ordered locus">alr1924</name>
</gene>
<keyword id="KW-0028">Amino-acid biosynthesis</keyword>
<keyword id="KW-0057">Aromatic amino acid biosynthesis</keyword>
<keyword id="KW-0170">Cobalt</keyword>
<keyword id="KW-0963">Cytoplasm</keyword>
<keyword id="KW-0456">Lyase</keyword>
<keyword id="KW-0479">Metal-binding</keyword>
<keyword id="KW-0520">NAD</keyword>
<keyword id="KW-0547">Nucleotide-binding</keyword>
<keyword id="KW-1185">Reference proteome</keyword>
<keyword id="KW-0862">Zinc</keyword>
<evidence type="ECO:0000255" key="1">
    <source>
        <dbReference type="HAMAP-Rule" id="MF_00110"/>
    </source>
</evidence>
<feature type="chain" id="PRO_0000140706" description="3-dehydroquinate synthase">
    <location>
        <begin position="1"/>
        <end position="363"/>
    </location>
</feature>
<feature type="binding site" evidence="1">
    <location>
        <begin position="107"/>
        <end position="111"/>
    </location>
    <ligand>
        <name>NAD(+)</name>
        <dbReference type="ChEBI" id="CHEBI:57540"/>
    </ligand>
</feature>
<feature type="binding site" evidence="1">
    <location>
        <begin position="131"/>
        <end position="132"/>
    </location>
    <ligand>
        <name>NAD(+)</name>
        <dbReference type="ChEBI" id="CHEBI:57540"/>
    </ligand>
</feature>
<feature type="binding site" evidence="1">
    <location>
        <position position="144"/>
    </location>
    <ligand>
        <name>NAD(+)</name>
        <dbReference type="ChEBI" id="CHEBI:57540"/>
    </ligand>
</feature>
<feature type="binding site" evidence="1">
    <location>
        <position position="153"/>
    </location>
    <ligand>
        <name>NAD(+)</name>
        <dbReference type="ChEBI" id="CHEBI:57540"/>
    </ligand>
</feature>
<feature type="binding site" evidence="1">
    <location>
        <position position="186"/>
    </location>
    <ligand>
        <name>Zn(2+)</name>
        <dbReference type="ChEBI" id="CHEBI:29105"/>
    </ligand>
</feature>
<feature type="binding site" evidence="1">
    <location>
        <position position="251"/>
    </location>
    <ligand>
        <name>Zn(2+)</name>
        <dbReference type="ChEBI" id="CHEBI:29105"/>
    </ligand>
</feature>
<feature type="binding site" evidence="1">
    <location>
        <position position="268"/>
    </location>
    <ligand>
        <name>Zn(2+)</name>
        <dbReference type="ChEBI" id="CHEBI:29105"/>
    </ligand>
</feature>
<protein>
    <recommendedName>
        <fullName evidence="1">3-dehydroquinate synthase</fullName>
        <shortName evidence="1">DHQS</shortName>
        <ecNumber evidence="1">4.2.3.4</ecNumber>
    </recommendedName>
</protein>
<reference key="1">
    <citation type="journal article" date="2001" name="DNA Res.">
        <title>Complete genomic sequence of the filamentous nitrogen-fixing cyanobacterium Anabaena sp. strain PCC 7120.</title>
        <authorList>
            <person name="Kaneko T."/>
            <person name="Nakamura Y."/>
            <person name="Wolk C.P."/>
            <person name="Kuritz T."/>
            <person name="Sasamoto S."/>
            <person name="Watanabe A."/>
            <person name="Iriguchi M."/>
            <person name="Ishikawa A."/>
            <person name="Kawashima K."/>
            <person name="Kimura T."/>
            <person name="Kishida Y."/>
            <person name="Kohara M."/>
            <person name="Matsumoto M."/>
            <person name="Matsuno A."/>
            <person name="Muraki A."/>
            <person name="Nakazaki N."/>
            <person name="Shimpo S."/>
            <person name="Sugimoto M."/>
            <person name="Takazawa M."/>
            <person name="Yamada M."/>
            <person name="Yasuda M."/>
            <person name="Tabata S."/>
        </authorList>
    </citation>
    <scope>NUCLEOTIDE SEQUENCE [LARGE SCALE GENOMIC DNA]</scope>
    <source>
        <strain>PCC 7120 / SAG 25.82 / UTEX 2576</strain>
    </source>
</reference>
<comment type="function">
    <text evidence="1">Catalyzes the conversion of 3-deoxy-D-arabino-heptulosonate 7-phosphate (DAHP) to dehydroquinate (DHQ).</text>
</comment>
<comment type="catalytic activity">
    <reaction evidence="1">
        <text>7-phospho-2-dehydro-3-deoxy-D-arabino-heptonate = 3-dehydroquinate + phosphate</text>
        <dbReference type="Rhea" id="RHEA:21968"/>
        <dbReference type="ChEBI" id="CHEBI:32364"/>
        <dbReference type="ChEBI" id="CHEBI:43474"/>
        <dbReference type="ChEBI" id="CHEBI:58394"/>
        <dbReference type="EC" id="4.2.3.4"/>
    </reaction>
</comment>
<comment type="cofactor">
    <cofactor evidence="1">
        <name>NAD(+)</name>
        <dbReference type="ChEBI" id="CHEBI:57540"/>
    </cofactor>
</comment>
<comment type="cofactor">
    <cofactor evidence="1">
        <name>Co(2+)</name>
        <dbReference type="ChEBI" id="CHEBI:48828"/>
    </cofactor>
    <cofactor evidence="1">
        <name>Zn(2+)</name>
        <dbReference type="ChEBI" id="CHEBI:29105"/>
    </cofactor>
    <text evidence="1">Binds 1 divalent metal cation per subunit. Can use either Co(2+) or Zn(2+).</text>
</comment>
<comment type="pathway">
    <text evidence="1">Metabolic intermediate biosynthesis; chorismate biosynthesis; chorismate from D-erythrose 4-phosphate and phosphoenolpyruvate: step 2/7.</text>
</comment>
<comment type="subcellular location">
    <subcellularLocation>
        <location evidence="1">Cytoplasm</location>
    </subcellularLocation>
</comment>
<comment type="similarity">
    <text evidence="1">Belongs to the sugar phosphate cyclases superfamily. Dehydroquinate synthase family.</text>
</comment>
<accession>Q8YVQ0</accession>
<name>AROB_NOSS1</name>